<name>EDNRA_CANLF</name>
<sequence length="426" mass="48566">METFCLKVTFWVALVGYVIGDHPESYSTNLSTPVDFTTFHGTELSFLVTTHRPTNLALPSNGSMHSYCPQQTKITSAFKYINTVISCTIFIVGMVGNATLLRIIYQNKCMRNGPNALIASLALGDLIYVVIDLPINVFKLLAGRWPFDHNDFGVFLCKLFPFLQKSSVGITVLNLCALSVDRYRAVASWSRVQGIGIPLITAIEIVSIWILSFILAIPEAIGFVMVPFEYKGEQHKTCMLNATSKFMEFYQDVKDWWLFGFYFCMPLVCTAIFYTLMTCEMLNRRNGSLRIALSEHLKQRREVAKTVFCLVVIFALCWFPLHLSRILKKTVYDEMDKNRCELLSFLRLMDYIGINLATMNSCINPIALYFVSKKFKNCFQSCLCCCCYQSKSLMTSVPMNGTSIQWKNHEQNNHNTERSSHKDSIN</sequence>
<protein>
    <recommendedName>
        <fullName evidence="6">Endothelin-1 receptor</fullName>
    </recommendedName>
    <alternativeName>
        <fullName evidence="2">Endothelin receptor type A</fullName>
        <shortName>ET-A</shortName>
        <shortName>ET-AR</shortName>
    </alternativeName>
</protein>
<reference key="1">
    <citation type="submission" date="2005-03" db="EMBL/GenBank/DDBJ databases">
        <title>Expression analysis of endothelin receptor type A gene in canine atopic dermatitis.</title>
        <authorList>
            <person name="Tsukui T."/>
            <person name="Yasuda N."/>
            <person name="Maeda S."/>
            <person name="Koyanagi M."/>
            <person name="Hashimoto R."/>
            <person name="Masuda K."/>
            <person name="Ohno K."/>
            <person name="Sakaguchi M."/>
            <person name="Tsujimoto H."/>
            <person name="Iwabuchi S."/>
        </authorList>
    </citation>
    <scope>NUCLEOTIDE SEQUENCE [MRNA]</scope>
</reference>
<proteinExistence type="evidence at transcript level"/>
<keyword id="KW-1003">Cell membrane</keyword>
<keyword id="KW-1015">Disulfide bond</keyword>
<keyword id="KW-0297">G-protein coupled receptor</keyword>
<keyword id="KW-0325">Glycoprotein</keyword>
<keyword id="KW-0472">Membrane</keyword>
<keyword id="KW-0597">Phosphoprotein</keyword>
<keyword id="KW-0675">Receptor</keyword>
<keyword id="KW-1185">Reference proteome</keyword>
<keyword id="KW-0732">Signal</keyword>
<keyword id="KW-0807">Transducer</keyword>
<keyword id="KW-0812">Transmembrane</keyword>
<keyword id="KW-1133">Transmembrane helix</keyword>
<accession>Q5KSU9</accession>
<evidence type="ECO:0000250" key="1"/>
<evidence type="ECO:0000250" key="2">
    <source>
        <dbReference type="UniProtKB" id="P25101"/>
    </source>
</evidence>
<evidence type="ECO:0000250" key="3">
    <source>
        <dbReference type="UniProtKB" id="P28088"/>
    </source>
</evidence>
<evidence type="ECO:0000255" key="4"/>
<evidence type="ECO:0000255" key="5">
    <source>
        <dbReference type="PROSITE-ProRule" id="PRU00521"/>
    </source>
</evidence>
<evidence type="ECO:0000305" key="6"/>
<gene>
    <name evidence="2" type="primary">EDNRA</name>
</gene>
<organism>
    <name type="scientific">Canis lupus familiaris</name>
    <name type="common">Dog</name>
    <name type="synonym">Canis familiaris</name>
    <dbReference type="NCBI Taxonomy" id="9615"/>
    <lineage>
        <taxon>Eukaryota</taxon>
        <taxon>Metazoa</taxon>
        <taxon>Chordata</taxon>
        <taxon>Craniata</taxon>
        <taxon>Vertebrata</taxon>
        <taxon>Euteleostomi</taxon>
        <taxon>Mammalia</taxon>
        <taxon>Eutheria</taxon>
        <taxon>Laurasiatheria</taxon>
        <taxon>Carnivora</taxon>
        <taxon>Caniformia</taxon>
        <taxon>Canidae</taxon>
        <taxon>Canis</taxon>
    </lineage>
</organism>
<dbReference type="EMBL" id="AB183284">
    <property type="protein sequence ID" value="BAD83849.2"/>
    <property type="molecule type" value="mRNA"/>
</dbReference>
<dbReference type="RefSeq" id="NP_001026802.1">
    <property type="nucleotide sequence ID" value="NM_001031632.1"/>
</dbReference>
<dbReference type="SMR" id="Q5KSU9"/>
<dbReference type="FunCoup" id="Q5KSU9">
    <property type="interactions" value="326"/>
</dbReference>
<dbReference type="STRING" id="9615.ENSCAFP00000011497"/>
<dbReference type="GlyCosmos" id="Q5KSU9">
    <property type="glycosylation" value="3 sites, No reported glycans"/>
</dbReference>
<dbReference type="PaxDb" id="9612-ENSCAFP00000011497"/>
<dbReference type="GeneID" id="450187"/>
<dbReference type="KEGG" id="cfa:450187"/>
<dbReference type="CTD" id="1909"/>
<dbReference type="eggNOG" id="KOG3656">
    <property type="taxonomic scope" value="Eukaryota"/>
</dbReference>
<dbReference type="InParanoid" id="Q5KSU9"/>
<dbReference type="OrthoDB" id="10049706at2759"/>
<dbReference type="Proteomes" id="UP000002254">
    <property type="component" value="Unplaced"/>
</dbReference>
<dbReference type="Proteomes" id="UP000694429">
    <property type="component" value="Unplaced"/>
</dbReference>
<dbReference type="Proteomes" id="UP000694542">
    <property type="component" value="Unplaced"/>
</dbReference>
<dbReference type="Proteomes" id="UP000805418">
    <property type="component" value="Unplaced"/>
</dbReference>
<dbReference type="GO" id="GO:0005886">
    <property type="term" value="C:plasma membrane"/>
    <property type="evidence" value="ECO:0000318"/>
    <property type="project" value="GO_Central"/>
</dbReference>
<dbReference type="GO" id="GO:0004962">
    <property type="term" value="F:endothelin receptor activity"/>
    <property type="evidence" value="ECO:0000318"/>
    <property type="project" value="GO_Central"/>
</dbReference>
<dbReference type="GO" id="GO:0048066">
    <property type="term" value="P:developmental pigmentation"/>
    <property type="evidence" value="ECO:0000318"/>
    <property type="project" value="GO_Central"/>
</dbReference>
<dbReference type="GO" id="GO:0086100">
    <property type="term" value="P:endothelin receptor signaling pathway"/>
    <property type="evidence" value="ECO:0000318"/>
    <property type="project" value="GO_Central"/>
</dbReference>
<dbReference type="GO" id="GO:0048484">
    <property type="term" value="P:enteric nervous system development"/>
    <property type="evidence" value="ECO:0007669"/>
    <property type="project" value="InterPro"/>
</dbReference>
<dbReference type="GO" id="GO:0008217">
    <property type="term" value="P:regulation of blood pressure"/>
    <property type="evidence" value="ECO:0007669"/>
    <property type="project" value="InterPro"/>
</dbReference>
<dbReference type="GO" id="GO:0042310">
    <property type="term" value="P:vasoconstriction"/>
    <property type="evidence" value="ECO:0000318"/>
    <property type="project" value="GO_Central"/>
</dbReference>
<dbReference type="CDD" id="cd15975">
    <property type="entry name" value="7tmA_ET-AR"/>
    <property type="match status" value="1"/>
</dbReference>
<dbReference type="FunFam" id="1.20.1070.10:FF:000076">
    <property type="entry name" value="Endothelin receptor type B"/>
    <property type="match status" value="1"/>
</dbReference>
<dbReference type="Gene3D" id="1.20.1070.10">
    <property type="entry name" value="Rhodopsin 7-helix transmembrane proteins"/>
    <property type="match status" value="1"/>
</dbReference>
<dbReference type="InterPro" id="IPR000499">
    <property type="entry name" value="Endthln_rcpt"/>
</dbReference>
<dbReference type="InterPro" id="IPR002175">
    <property type="entry name" value="ETA_rcpt"/>
</dbReference>
<dbReference type="InterPro" id="IPR051193">
    <property type="entry name" value="GPCR_endothelin_rcpt"/>
</dbReference>
<dbReference type="InterPro" id="IPR000276">
    <property type="entry name" value="GPCR_Rhodpsn"/>
</dbReference>
<dbReference type="InterPro" id="IPR017452">
    <property type="entry name" value="GPCR_Rhodpsn_7TM"/>
</dbReference>
<dbReference type="PANTHER" id="PTHR46099:SF2">
    <property type="entry name" value="ENDOTHELIN-1 RECEPTOR"/>
    <property type="match status" value="1"/>
</dbReference>
<dbReference type="PANTHER" id="PTHR46099">
    <property type="entry name" value="G_PROTEIN_RECEP_F1_2 DOMAIN-CONTAINING PROTEIN"/>
    <property type="match status" value="1"/>
</dbReference>
<dbReference type="Pfam" id="PF00001">
    <property type="entry name" value="7tm_1"/>
    <property type="match status" value="1"/>
</dbReference>
<dbReference type="PRINTS" id="PR00570">
    <property type="entry name" value="ENDOTHELINAR"/>
</dbReference>
<dbReference type="PRINTS" id="PR00366">
    <property type="entry name" value="ENDOTHELINR"/>
</dbReference>
<dbReference type="PRINTS" id="PR00237">
    <property type="entry name" value="GPCRRHODOPSN"/>
</dbReference>
<dbReference type="SUPFAM" id="SSF81321">
    <property type="entry name" value="Family A G protein-coupled receptor-like"/>
    <property type="match status" value="1"/>
</dbReference>
<dbReference type="PROSITE" id="PS00237">
    <property type="entry name" value="G_PROTEIN_RECEP_F1_1"/>
    <property type="match status" value="1"/>
</dbReference>
<dbReference type="PROSITE" id="PS50262">
    <property type="entry name" value="G_PROTEIN_RECEP_F1_2"/>
    <property type="match status" value="1"/>
</dbReference>
<feature type="signal peptide" evidence="4">
    <location>
        <begin position="1"/>
        <end position="20"/>
    </location>
</feature>
<feature type="chain" id="PRO_0000012720" description="Endothelin-1 receptor">
    <location>
        <begin position="21"/>
        <end position="426"/>
    </location>
</feature>
<feature type="topological domain" description="Extracellular" evidence="4">
    <location>
        <begin position="21"/>
        <end position="79"/>
    </location>
</feature>
<feature type="transmembrane region" description="Helical; Name=1" evidence="4">
    <location>
        <begin position="80"/>
        <end position="101"/>
    </location>
</feature>
<feature type="topological domain" description="Cytoplasmic" evidence="4">
    <location>
        <begin position="102"/>
        <end position="111"/>
    </location>
</feature>
<feature type="transmembrane region" description="Helical; Name=2" evidence="4">
    <location>
        <begin position="112"/>
        <end position="131"/>
    </location>
</feature>
<feature type="topological domain" description="Extracellular" evidence="4">
    <location>
        <begin position="132"/>
        <end position="158"/>
    </location>
</feature>
<feature type="transmembrane region" description="Helical; Name=3" evidence="4">
    <location>
        <begin position="159"/>
        <end position="180"/>
    </location>
</feature>
<feature type="topological domain" description="Cytoplasmic" evidence="4">
    <location>
        <begin position="181"/>
        <end position="204"/>
    </location>
</feature>
<feature type="transmembrane region" description="Helical; Name=4" evidence="4">
    <location>
        <begin position="205"/>
        <end position="228"/>
    </location>
</feature>
<feature type="topological domain" description="Extracellular" evidence="4">
    <location>
        <begin position="229"/>
        <end position="255"/>
    </location>
</feature>
<feature type="transmembrane region" description="Helical; Name=5" evidence="4">
    <location>
        <begin position="256"/>
        <end position="277"/>
    </location>
</feature>
<feature type="topological domain" description="Cytoplasmic" evidence="4">
    <location>
        <begin position="278"/>
        <end position="305"/>
    </location>
</feature>
<feature type="transmembrane region" description="Helical; Name=6" evidence="4">
    <location>
        <begin position="306"/>
        <end position="327"/>
    </location>
</feature>
<feature type="topological domain" description="Extracellular" evidence="4">
    <location>
        <begin position="328"/>
        <end position="346"/>
    </location>
</feature>
<feature type="transmembrane region" description="Helical; Name=7" evidence="4">
    <location>
        <begin position="347"/>
        <end position="371"/>
    </location>
</feature>
<feature type="topological domain" description="Cytoplasmic" evidence="4">
    <location>
        <begin position="372"/>
        <end position="426"/>
    </location>
</feature>
<feature type="modified residue" description="Phosphoserine" evidence="3">
    <location>
        <position position="424"/>
    </location>
</feature>
<feature type="glycosylation site" description="N-linked (GlcNAc...) asparagine" evidence="4">
    <location>
        <position position="29"/>
    </location>
</feature>
<feature type="glycosylation site" description="N-linked (GlcNAc...) asparagine" evidence="4">
    <location>
        <position position="61"/>
    </location>
</feature>
<feature type="glycosylation site" description="N-linked (GlcNAc...) asparagine" evidence="4">
    <location>
        <position position="241"/>
    </location>
</feature>
<feature type="disulfide bond" evidence="5">
    <location>
        <begin position="157"/>
        <end position="238"/>
    </location>
</feature>
<comment type="function">
    <text evidence="1">Receptor for endothelin-1. Mediates its action by association with G proteins that activate a phosphatidylinositol-calcium second messenger system. The rank order of binding affinities for ET-A is: ET1 &gt; ET2 &gt;&gt; ET3 (By similarity).</text>
</comment>
<comment type="subunit">
    <text evidence="1">Interacts with HDAC7 and KAT5.</text>
</comment>
<comment type="subcellular location">
    <subcellularLocation>
        <location>Cell membrane</location>
        <topology>Multi-pass membrane protein</topology>
    </subcellularLocation>
</comment>
<comment type="similarity">
    <text evidence="5">Belongs to the G-protein coupled receptor 1 family. Endothelin receptor subfamily. EDNRA sub-subfamily.</text>
</comment>